<sequence>MFTIDFSDHTGLVKDAWYKQIEDLLEFAKKEEHIEDDAELSVTFVDKQEIQEINRTYRDKDKVTDVISFALEEDEPDIDFSGLDIPRVLGDIIICTDVAQEQANNYGHSFERELGFLALHGFLHLLGYDHMTEADEKEMFGRQDTILNAYGLTRD</sequence>
<gene>
    <name evidence="1" type="primary">ybeY</name>
    <name type="ordered locus">SAB1442c</name>
</gene>
<dbReference type="EC" id="3.1.-.-" evidence="1"/>
<dbReference type="EMBL" id="AJ938182">
    <property type="protein sequence ID" value="CAI81131.1"/>
    <property type="molecule type" value="Genomic_DNA"/>
</dbReference>
<dbReference type="RefSeq" id="WP_000494130.1">
    <property type="nucleotide sequence ID" value="NC_007622.1"/>
</dbReference>
<dbReference type="SMR" id="Q2YT09"/>
<dbReference type="KEGG" id="sab:SAB1442c"/>
<dbReference type="HOGENOM" id="CLU_106710_3_0_9"/>
<dbReference type="GO" id="GO:0005737">
    <property type="term" value="C:cytoplasm"/>
    <property type="evidence" value="ECO:0007669"/>
    <property type="project" value="UniProtKB-SubCell"/>
</dbReference>
<dbReference type="GO" id="GO:0004222">
    <property type="term" value="F:metalloendopeptidase activity"/>
    <property type="evidence" value="ECO:0007669"/>
    <property type="project" value="InterPro"/>
</dbReference>
<dbReference type="GO" id="GO:0004521">
    <property type="term" value="F:RNA endonuclease activity"/>
    <property type="evidence" value="ECO:0007669"/>
    <property type="project" value="UniProtKB-UniRule"/>
</dbReference>
<dbReference type="GO" id="GO:0008270">
    <property type="term" value="F:zinc ion binding"/>
    <property type="evidence" value="ECO:0007669"/>
    <property type="project" value="UniProtKB-UniRule"/>
</dbReference>
<dbReference type="GO" id="GO:0006364">
    <property type="term" value="P:rRNA processing"/>
    <property type="evidence" value="ECO:0007669"/>
    <property type="project" value="UniProtKB-UniRule"/>
</dbReference>
<dbReference type="Gene3D" id="3.40.390.30">
    <property type="entry name" value="Metalloproteases ('zincins'), catalytic domain"/>
    <property type="match status" value="1"/>
</dbReference>
<dbReference type="HAMAP" id="MF_00009">
    <property type="entry name" value="Endoribonucl_YbeY"/>
    <property type="match status" value="1"/>
</dbReference>
<dbReference type="InterPro" id="IPR023091">
    <property type="entry name" value="MetalPrtase_cat_dom_sf_prd"/>
</dbReference>
<dbReference type="InterPro" id="IPR002036">
    <property type="entry name" value="YbeY"/>
</dbReference>
<dbReference type="InterPro" id="IPR020549">
    <property type="entry name" value="YbeY_CS"/>
</dbReference>
<dbReference type="NCBIfam" id="TIGR00043">
    <property type="entry name" value="rRNA maturation RNase YbeY"/>
    <property type="match status" value="1"/>
</dbReference>
<dbReference type="PANTHER" id="PTHR46986">
    <property type="entry name" value="ENDORIBONUCLEASE YBEY, CHLOROPLASTIC"/>
    <property type="match status" value="1"/>
</dbReference>
<dbReference type="PANTHER" id="PTHR46986:SF1">
    <property type="entry name" value="ENDORIBONUCLEASE YBEY, CHLOROPLASTIC"/>
    <property type="match status" value="1"/>
</dbReference>
<dbReference type="Pfam" id="PF02130">
    <property type="entry name" value="YbeY"/>
    <property type="match status" value="1"/>
</dbReference>
<dbReference type="SUPFAM" id="SSF55486">
    <property type="entry name" value="Metalloproteases ('zincins'), catalytic domain"/>
    <property type="match status" value="1"/>
</dbReference>
<dbReference type="PROSITE" id="PS01306">
    <property type="entry name" value="UPF0054"/>
    <property type="match status" value="1"/>
</dbReference>
<comment type="function">
    <text evidence="1">Single strand-specific metallo-endoribonuclease involved in late-stage 70S ribosome quality control and in maturation of the 3' terminus of the 16S rRNA.</text>
</comment>
<comment type="cofactor">
    <cofactor evidence="1">
        <name>Zn(2+)</name>
        <dbReference type="ChEBI" id="CHEBI:29105"/>
    </cofactor>
    <text evidence="1">Binds 1 zinc ion.</text>
</comment>
<comment type="subcellular location">
    <subcellularLocation>
        <location evidence="1">Cytoplasm</location>
    </subcellularLocation>
</comment>
<comment type="similarity">
    <text evidence="1">Belongs to the endoribonuclease YbeY family.</text>
</comment>
<proteinExistence type="inferred from homology"/>
<accession>Q2YT09</accession>
<feature type="chain" id="PRO_0000284319" description="Endoribonuclease YbeY">
    <location>
        <begin position="1"/>
        <end position="155"/>
    </location>
</feature>
<feature type="binding site" evidence="1">
    <location>
        <position position="120"/>
    </location>
    <ligand>
        <name>Zn(2+)</name>
        <dbReference type="ChEBI" id="CHEBI:29105"/>
        <note>catalytic</note>
    </ligand>
</feature>
<feature type="binding site" evidence="1">
    <location>
        <position position="124"/>
    </location>
    <ligand>
        <name>Zn(2+)</name>
        <dbReference type="ChEBI" id="CHEBI:29105"/>
        <note>catalytic</note>
    </ligand>
</feature>
<feature type="binding site" evidence="1">
    <location>
        <position position="130"/>
    </location>
    <ligand>
        <name>Zn(2+)</name>
        <dbReference type="ChEBI" id="CHEBI:29105"/>
        <note>catalytic</note>
    </ligand>
</feature>
<evidence type="ECO:0000255" key="1">
    <source>
        <dbReference type="HAMAP-Rule" id="MF_00009"/>
    </source>
</evidence>
<keyword id="KW-0963">Cytoplasm</keyword>
<keyword id="KW-0255">Endonuclease</keyword>
<keyword id="KW-0378">Hydrolase</keyword>
<keyword id="KW-0479">Metal-binding</keyword>
<keyword id="KW-0540">Nuclease</keyword>
<keyword id="KW-0690">Ribosome biogenesis</keyword>
<keyword id="KW-0698">rRNA processing</keyword>
<keyword id="KW-0862">Zinc</keyword>
<name>YBEY_STAAB</name>
<organism>
    <name type="scientific">Staphylococcus aureus (strain bovine RF122 / ET3-1)</name>
    <dbReference type="NCBI Taxonomy" id="273036"/>
    <lineage>
        <taxon>Bacteria</taxon>
        <taxon>Bacillati</taxon>
        <taxon>Bacillota</taxon>
        <taxon>Bacilli</taxon>
        <taxon>Bacillales</taxon>
        <taxon>Staphylococcaceae</taxon>
        <taxon>Staphylococcus</taxon>
    </lineage>
</organism>
<reference key="1">
    <citation type="journal article" date="2007" name="PLoS ONE">
        <title>Molecular correlates of host specialization in Staphylococcus aureus.</title>
        <authorList>
            <person name="Herron-Olson L."/>
            <person name="Fitzgerald J.R."/>
            <person name="Musser J.M."/>
            <person name="Kapur V."/>
        </authorList>
    </citation>
    <scope>NUCLEOTIDE SEQUENCE [LARGE SCALE GENOMIC DNA]</scope>
    <source>
        <strain>bovine RF122 / ET3-1</strain>
    </source>
</reference>
<protein>
    <recommendedName>
        <fullName evidence="1">Endoribonuclease YbeY</fullName>
        <ecNumber evidence="1">3.1.-.-</ecNumber>
    </recommendedName>
</protein>